<organism>
    <name type="scientific">Rhodobacter capsulatus</name>
    <name type="common">Rhodopseudomonas capsulata</name>
    <dbReference type="NCBI Taxonomy" id="1061"/>
    <lineage>
        <taxon>Bacteria</taxon>
        <taxon>Pseudomonadati</taxon>
        <taxon>Pseudomonadota</taxon>
        <taxon>Alphaproteobacteria</taxon>
        <taxon>Rhodobacterales</taxon>
        <taxon>Rhodobacter group</taxon>
        <taxon>Rhodobacter</taxon>
    </lineage>
</organism>
<sequence>MAEYQNFFNQVQVAGAPEMGLKEDVDTFERTPAGMFNILGWMGNAQIGPIYLGIAGTVSLAFGAAWFFTIGVWYWYQAGFDPFIFMRDLFFFSLEPPPAEYGLAIAPLKQGGVWQIASLFMAISVIAWWVRVYTRADQLGMGKHMAWAFLSAIWLWSVLGFWRPILMGSWSVAPPYGIFSHLDWTNQFSLDHGNLFYNPFHGLSIAALYGSALLFAMHGATILAVTRFGGERELEQIVDRGTASERAALFWRWTMGFNATMEGIHRWAIWMAVMVTLTGGIGILLSGTVVDNWYVWAQVHGYAPVTP</sequence>
<gene>
    <name type="primary">pufM</name>
</gene>
<name>RCEM_RHOCA</name>
<comment type="function">
    <text>The reaction center is a membrane-bound complex that mediates the initial photochemical event in the electron transfer process of photosynthesis.</text>
</comment>
<comment type="subunit">
    <text>Reaction center is composed of four bacteriochlorophylls, two bacteriopheophytins, two ubiquinones, one iron, and three highly hydrophobic polypeptide chains (designated L, M, and H).</text>
</comment>
<comment type="subcellular location">
    <subcellularLocation>
        <location>Cellular chromatophore membrane</location>
        <topology>Multi-pass membrane protein</topology>
    </subcellularLocation>
</comment>
<comment type="similarity">
    <text evidence="1">Belongs to the reaction center PufL/M/PsbA/D family.</text>
</comment>
<dbReference type="EMBL" id="AH000921">
    <property type="protein sequence ID" value="AAA26175.1"/>
    <property type="molecule type" value="Genomic_DNA"/>
</dbReference>
<dbReference type="EMBL" id="Z11165">
    <property type="protein sequence ID" value="CAA77555.1"/>
    <property type="molecule type" value="Genomic_DNA"/>
</dbReference>
<dbReference type="PIR" id="A28771">
    <property type="entry name" value="A28771"/>
</dbReference>
<dbReference type="RefSeq" id="WP_013066438.1">
    <property type="nucleotide sequence ID" value="NZ_VIBE01000010.1"/>
</dbReference>
<dbReference type="PDB" id="7YML">
    <property type="method" value="EM"/>
    <property type="resolution" value="2.60 A"/>
    <property type="chains" value="M=1-307"/>
</dbReference>
<dbReference type="PDB" id="8B64">
    <property type="method" value="EM"/>
    <property type="resolution" value="2.59 A"/>
    <property type="chains" value="M=1-307"/>
</dbReference>
<dbReference type="PDBsum" id="7YML"/>
<dbReference type="PDBsum" id="8B64"/>
<dbReference type="EMDB" id="EMD-15862"/>
<dbReference type="EMDB" id="EMD-33931"/>
<dbReference type="SMR" id="P11847"/>
<dbReference type="GeneID" id="31489640"/>
<dbReference type="OMA" id="IFPHLDW"/>
<dbReference type="GO" id="GO:0030077">
    <property type="term" value="C:plasma membrane light-harvesting complex"/>
    <property type="evidence" value="ECO:0007669"/>
    <property type="project" value="InterPro"/>
</dbReference>
<dbReference type="GO" id="GO:0042717">
    <property type="term" value="C:plasma membrane-derived chromatophore membrane"/>
    <property type="evidence" value="ECO:0007669"/>
    <property type="project" value="UniProtKB-SubCell"/>
</dbReference>
<dbReference type="GO" id="GO:0042314">
    <property type="term" value="F:bacteriochlorophyll binding"/>
    <property type="evidence" value="ECO:0007669"/>
    <property type="project" value="UniProtKB-KW"/>
</dbReference>
<dbReference type="GO" id="GO:0045156">
    <property type="term" value="F:electron transporter, transferring electrons within the cyclic electron transport pathway of photosynthesis activity"/>
    <property type="evidence" value="ECO:0007669"/>
    <property type="project" value="InterPro"/>
</dbReference>
<dbReference type="GO" id="GO:0046872">
    <property type="term" value="F:metal ion binding"/>
    <property type="evidence" value="ECO:0007669"/>
    <property type="project" value="UniProtKB-KW"/>
</dbReference>
<dbReference type="GO" id="GO:0009772">
    <property type="term" value="P:photosynthetic electron transport in photosystem II"/>
    <property type="evidence" value="ECO:0007669"/>
    <property type="project" value="InterPro"/>
</dbReference>
<dbReference type="Gene3D" id="1.20.85.10">
    <property type="entry name" value="Photosystem II protein D1-like"/>
    <property type="match status" value="2"/>
</dbReference>
<dbReference type="InterPro" id="IPR036854">
    <property type="entry name" value="Photo_II_D1/D2_sf"/>
</dbReference>
<dbReference type="InterPro" id="IPR000484">
    <property type="entry name" value="Photo_RC_L/M"/>
</dbReference>
<dbReference type="InterPro" id="IPR055265">
    <property type="entry name" value="Photo_RC_L/M_CS"/>
</dbReference>
<dbReference type="InterPro" id="IPR005781">
    <property type="entry name" value="Photo_RC_M"/>
</dbReference>
<dbReference type="NCBIfam" id="TIGR01115">
    <property type="entry name" value="pufM"/>
    <property type="match status" value="1"/>
</dbReference>
<dbReference type="Pfam" id="PF00124">
    <property type="entry name" value="Photo_RC"/>
    <property type="match status" value="1"/>
</dbReference>
<dbReference type="PRINTS" id="PR00256">
    <property type="entry name" value="REACTNCENTRE"/>
</dbReference>
<dbReference type="SUPFAM" id="SSF81483">
    <property type="entry name" value="Bacterial photosystem II reaction centre, L and M subunits"/>
    <property type="match status" value="1"/>
</dbReference>
<dbReference type="PROSITE" id="PS00244">
    <property type="entry name" value="REACTION_CENTER"/>
    <property type="match status" value="1"/>
</dbReference>
<protein>
    <recommendedName>
        <fullName>Reaction center protein M chain</fullName>
    </recommendedName>
    <alternativeName>
        <fullName>Photosynthetic reaction center M subunit</fullName>
    </alternativeName>
</protein>
<proteinExistence type="evidence at protein level"/>
<evidence type="ECO:0000305" key="1"/>
<evidence type="ECO:0007829" key="2">
    <source>
        <dbReference type="PDB" id="7YML"/>
    </source>
</evidence>
<evidence type="ECO:0007829" key="3">
    <source>
        <dbReference type="PDB" id="8B64"/>
    </source>
</evidence>
<accession>P11847</accession>
<feature type="initiator methionine" description="Removed">
    <location>
        <position position="1"/>
    </location>
</feature>
<feature type="chain" id="PRO_0000090414" description="Reaction center protein M chain">
    <location>
        <begin position="2"/>
        <end position="307"/>
    </location>
</feature>
<feature type="transmembrane region" description="Helical">
    <location>
        <begin position="52"/>
        <end position="78"/>
    </location>
</feature>
<feature type="transmembrane region" description="Helical">
    <location>
        <begin position="110"/>
        <end position="139"/>
    </location>
</feature>
<feature type="transmembrane region" description="Helical">
    <location>
        <begin position="142"/>
        <end position="167"/>
    </location>
</feature>
<feature type="transmembrane region" description="Helical">
    <location>
        <begin position="197"/>
        <end position="225"/>
    </location>
</feature>
<feature type="transmembrane region" description="Helical">
    <location>
        <begin position="259"/>
        <end position="285"/>
    </location>
</feature>
<feature type="binding site" description="axial binding residue">
    <location>
        <position position="181"/>
    </location>
    <ligand>
        <name>(7R,8Z)-bacteriochlorophyll b</name>
        <dbReference type="ChEBI" id="CHEBI:30034"/>
    </ligand>
    <ligandPart>
        <name>Mg</name>
        <dbReference type="ChEBI" id="CHEBI:25107"/>
    </ligandPart>
</feature>
<feature type="binding site" description="axial binding residue">
    <location>
        <position position="201"/>
    </location>
    <ligand>
        <name>(7R,8Z)-bacteriochlorophyll b</name>
        <dbReference type="ChEBI" id="CHEBI:30034"/>
    </ligand>
    <ligandPart>
        <name>Mg</name>
        <dbReference type="ChEBI" id="CHEBI:25107"/>
    </ligandPart>
</feature>
<feature type="binding site">
    <location>
        <position position="218"/>
    </location>
    <ligand>
        <name>Fe cation</name>
        <dbReference type="ChEBI" id="CHEBI:24875"/>
    </ligand>
</feature>
<feature type="binding site">
    <location>
        <position position="233"/>
    </location>
    <ligand>
        <name>Fe cation</name>
        <dbReference type="ChEBI" id="CHEBI:24875"/>
    </ligand>
</feature>
<feature type="binding site">
    <location>
        <position position="251"/>
    </location>
    <ligand>
        <name>a ubiquinone</name>
        <dbReference type="ChEBI" id="CHEBI:16389"/>
    </ligand>
</feature>
<feature type="binding site">
    <location>
        <position position="265"/>
    </location>
    <ligand>
        <name>Fe cation</name>
        <dbReference type="ChEBI" id="CHEBI:24875"/>
    </ligand>
</feature>
<feature type="strand" evidence="3">
    <location>
        <begin position="10"/>
        <end position="14"/>
    </location>
</feature>
<feature type="strand" evidence="2">
    <location>
        <begin position="23"/>
        <end position="25"/>
    </location>
</feature>
<feature type="helix" evidence="3">
    <location>
        <begin position="27"/>
        <end position="29"/>
    </location>
</feature>
<feature type="helix" evidence="3">
    <location>
        <begin position="37"/>
        <end position="40"/>
    </location>
</feature>
<feature type="helix" evidence="3">
    <location>
        <begin position="53"/>
        <end position="78"/>
    </location>
</feature>
<feature type="helix" evidence="3">
    <location>
        <begin position="82"/>
        <end position="87"/>
    </location>
</feature>
<feature type="turn" evidence="3">
    <location>
        <begin position="88"/>
        <end position="91"/>
    </location>
</feature>
<feature type="helix" evidence="3">
    <location>
        <begin position="99"/>
        <end position="101"/>
    </location>
</feature>
<feature type="helix" evidence="3">
    <location>
        <begin position="108"/>
        <end position="110"/>
    </location>
</feature>
<feature type="helix" evidence="3">
    <location>
        <begin position="112"/>
        <end position="138"/>
    </location>
</feature>
<feature type="helix" evidence="3">
    <location>
        <begin position="144"/>
        <end position="160"/>
    </location>
</feature>
<feature type="helix" evidence="3">
    <location>
        <begin position="162"/>
        <end position="167"/>
    </location>
</feature>
<feature type="helix" evidence="3">
    <location>
        <begin position="170"/>
        <end position="172"/>
    </location>
</feature>
<feature type="helix" evidence="3">
    <location>
        <begin position="178"/>
        <end position="191"/>
    </location>
</feature>
<feature type="helix" evidence="3">
    <location>
        <begin position="195"/>
        <end position="197"/>
    </location>
</feature>
<feature type="helix" evidence="3">
    <location>
        <begin position="199"/>
        <end position="224"/>
    </location>
</feature>
<feature type="helix" evidence="3">
    <location>
        <begin position="226"/>
        <end position="228"/>
    </location>
</feature>
<feature type="turn" evidence="3">
    <location>
        <begin position="229"/>
        <end position="231"/>
    </location>
</feature>
<feature type="helix" evidence="3">
    <location>
        <begin position="233"/>
        <end position="238"/>
    </location>
</feature>
<feature type="helix" evidence="3">
    <location>
        <begin position="242"/>
        <end position="255"/>
    </location>
</feature>
<feature type="helix" evidence="3">
    <location>
        <begin position="263"/>
        <end position="285"/>
    </location>
</feature>
<feature type="turn" evidence="3">
    <location>
        <begin position="287"/>
        <end position="289"/>
    </location>
</feature>
<feature type="helix" evidence="3">
    <location>
        <begin position="293"/>
        <end position="299"/>
    </location>
</feature>
<feature type="strand" evidence="2">
    <location>
        <begin position="301"/>
        <end position="303"/>
    </location>
</feature>
<reference key="1">
    <citation type="journal article" date="1984" name="Cell">
        <title>Nucleotide and deduced polypeptide sequences of the photosynthetic reaction-center, B870 antenna, and flanking polypeptides from R. capsulata.</title>
        <authorList>
            <person name="Youvan D.C."/>
            <person name="Bylina E.J."/>
            <person name="Alberti M."/>
            <person name="Begusch H."/>
            <person name="Hearst J.E."/>
        </authorList>
    </citation>
    <scope>NUCLEOTIDE SEQUENCE [GENOMIC DNA]</scope>
</reference>
<reference key="2">
    <citation type="journal article" date="1995" name="Proteins">
        <title>Structural model of the photosynthetic reaction center of Rhodobacter capsulatus.</title>
        <authorList>
            <person name="Foloppe N."/>
            <person name="Ferrand M."/>
            <person name="Breton J."/>
            <person name="Smith J.C."/>
        </authorList>
    </citation>
    <scope>3D-STRUCTURE MODELING</scope>
</reference>
<keyword id="KW-0002">3D-structure</keyword>
<keyword id="KW-0076">Bacteriochlorophyll</keyword>
<keyword id="KW-0148">Chlorophyll</keyword>
<keyword id="KW-0157">Chromophore</keyword>
<keyword id="KW-0249">Electron transport</keyword>
<keyword id="KW-0408">Iron</keyword>
<keyword id="KW-0460">Magnesium</keyword>
<keyword id="KW-0472">Membrane</keyword>
<keyword id="KW-0479">Metal-binding</keyword>
<keyword id="KW-0602">Photosynthesis</keyword>
<keyword id="KW-0674">Reaction center</keyword>
<keyword id="KW-0812">Transmembrane</keyword>
<keyword id="KW-1133">Transmembrane helix</keyword>
<keyword id="KW-0813">Transport</keyword>